<accession>Q3IQA0</accession>
<protein>
    <recommendedName>
        <fullName evidence="1">Small ribosomal subunit protein eS1</fullName>
    </recommendedName>
    <alternativeName>
        <fullName evidence="2">30S ribosomal protein S3Ae</fullName>
    </alternativeName>
    <alternativeName>
        <fullName evidence="1">Ribosomal protein S1e</fullName>
    </alternativeName>
</protein>
<reference key="1">
    <citation type="journal article" date="2005" name="Genome Res.">
        <title>Living with two extremes: conclusions from the genome sequence of Natronomonas pharaonis.</title>
        <authorList>
            <person name="Falb M."/>
            <person name="Pfeiffer F."/>
            <person name="Palm P."/>
            <person name="Rodewald K."/>
            <person name="Hickmann V."/>
            <person name="Tittor J."/>
            <person name="Oesterhelt D."/>
        </authorList>
    </citation>
    <scope>NUCLEOTIDE SEQUENCE [LARGE SCALE GENOMIC DNA]</scope>
    <source>
        <strain>ATCC 35678 / DSM 2160 / CIP 103997 / JCM 8858 / NBRC 14720 / NCIMB 2260 / Gabara</strain>
    </source>
</reference>
<proteinExistence type="inferred from homology"/>
<keyword id="KW-1185">Reference proteome</keyword>
<keyword id="KW-0687">Ribonucleoprotein</keyword>
<keyword id="KW-0689">Ribosomal protein</keyword>
<sequence>MSERSVSKQKQEKRWYTVMAPEIFDRAELGETPADEPEQVYDRTVQTTLGELQNDPSENNTKLTFQISDVGSDTAYTDFVQHELTRDYLRSLTRRGTSKVDAFVTVLTTDDYRVQVQPVAYTTKSADRSQEQAIRSTMVDLVEESAADNTFADLIDSIVEGRLSSAIYNEAKTIYPLRRVEIQKTRLQASPEEVAAEEEASVDVDD</sequence>
<comment type="similarity">
    <text evidence="1">Belongs to the eukaryotic ribosomal protein eS1 family.</text>
</comment>
<organism>
    <name type="scientific">Natronomonas pharaonis (strain ATCC 35678 / DSM 2160 / CIP 103997 / JCM 8858 / NBRC 14720 / NCIMB 2260 / Gabara)</name>
    <name type="common">Halobacterium pharaonis</name>
    <dbReference type="NCBI Taxonomy" id="348780"/>
    <lineage>
        <taxon>Archaea</taxon>
        <taxon>Methanobacteriati</taxon>
        <taxon>Methanobacteriota</taxon>
        <taxon>Stenosarchaea group</taxon>
        <taxon>Halobacteria</taxon>
        <taxon>Halobacteriales</taxon>
        <taxon>Haloarculaceae</taxon>
        <taxon>Natronomonas</taxon>
    </lineage>
</organism>
<feature type="chain" id="PRO_1000005197" description="Small ribosomal subunit protein eS1">
    <location>
        <begin position="1"/>
        <end position="206"/>
    </location>
</feature>
<evidence type="ECO:0000255" key="1">
    <source>
        <dbReference type="HAMAP-Rule" id="MF_00359"/>
    </source>
</evidence>
<evidence type="ECO:0000305" key="2"/>
<dbReference type="EMBL" id="CR936257">
    <property type="protein sequence ID" value="CAI49696.1"/>
    <property type="molecule type" value="Genomic_DNA"/>
</dbReference>
<dbReference type="RefSeq" id="WP_011323318.1">
    <property type="nucleotide sequence ID" value="NC_007426.1"/>
</dbReference>
<dbReference type="SMR" id="Q3IQA0"/>
<dbReference type="STRING" id="348780.NP_3210A"/>
<dbReference type="EnsemblBacteria" id="CAI49696">
    <property type="protein sequence ID" value="CAI49696"/>
    <property type="gene ID" value="NP_3210A"/>
</dbReference>
<dbReference type="GeneID" id="3703181"/>
<dbReference type="KEGG" id="nph:NP_3210A"/>
<dbReference type="eggNOG" id="arCOG04186">
    <property type="taxonomic scope" value="Archaea"/>
</dbReference>
<dbReference type="HOGENOM" id="CLU_062507_1_0_2"/>
<dbReference type="OrthoDB" id="30639at2157"/>
<dbReference type="Proteomes" id="UP000002698">
    <property type="component" value="Chromosome"/>
</dbReference>
<dbReference type="GO" id="GO:1990904">
    <property type="term" value="C:ribonucleoprotein complex"/>
    <property type="evidence" value="ECO:0007669"/>
    <property type="project" value="UniProtKB-KW"/>
</dbReference>
<dbReference type="GO" id="GO:0005840">
    <property type="term" value="C:ribosome"/>
    <property type="evidence" value="ECO:0007669"/>
    <property type="project" value="UniProtKB-KW"/>
</dbReference>
<dbReference type="GO" id="GO:0003735">
    <property type="term" value="F:structural constituent of ribosome"/>
    <property type="evidence" value="ECO:0007669"/>
    <property type="project" value="InterPro"/>
</dbReference>
<dbReference type="GO" id="GO:0006412">
    <property type="term" value="P:translation"/>
    <property type="evidence" value="ECO:0007669"/>
    <property type="project" value="UniProtKB-UniRule"/>
</dbReference>
<dbReference type="HAMAP" id="MF_00359">
    <property type="entry name" value="Ribosomal_eS1"/>
    <property type="match status" value="1"/>
</dbReference>
<dbReference type="InterPro" id="IPR001593">
    <property type="entry name" value="Ribosomal_eS1"/>
</dbReference>
<dbReference type="InterPro" id="IPR030838">
    <property type="entry name" value="Ribosomal_eS1_arc"/>
</dbReference>
<dbReference type="NCBIfam" id="NF003142">
    <property type="entry name" value="PRK04057.1"/>
    <property type="match status" value="1"/>
</dbReference>
<dbReference type="PANTHER" id="PTHR11830">
    <property type="entry name" value="40S RIBOSOMAL PROTEIN S3A"/>
    <property type="match status" value="1"/>
</dbReference>
<dbReference type="Pfam" id="PF01015">
    <property type="entry name" value="Ribosomal_S3Ae"/>
    <property type="match status" value="1"/>
</dbReference>
<dbReference type="SMART" id="SM01397">
    <property type="entry name" value="Ribosomal_S3Ae"/>
    <property type="match status" value="1"/>
</dbReference>
<name>RS3A_NATPD</name>
<gene>
    <name evidence="1" type="primary">rps3ae</name>
    <name type="ordered locus">NP_3210A</name>
</gene>